<protein>
    <recommendedName>
        <fullName>Phosphatidylinositol 3-kinase catalytic subunit type 3</fullName>
        <shortName>PI3-kinase type 3</shortName>
        <shortName>PI3K type 3</shortName>
        <shortName>PtdIns-3-kinase type 3</shortName>
        <ecNumber evidence="2">2.7.1.137</ecNumber>
    </recommendedName>
    <alternativeName>
        <fullName>Phosphoinositide-3-kinase class 3</fullName>
    </alternativeName>
</protein>
<dbReference type="EC" id="2.7.1.137" evidence="2"/>
<dbReference type="EMBL" id="BC077528">
    <property type="protein sequence ID" value="AAH77528.1"/>
    <property type="molecule type" value="mRNA"/>
</dbReference>
<dbReference type="RefSeq" id="NP_001086836.1">
    <property type="nucleotide sequence ID" value="NM_001093367.1"/>
</dbReference>
<dbReference type="SMR" id="Q6AZN6"/>
<dbReference type="IntAct" id="Q6AZN6">
    <property type="interactions" value="1"/>
</dbReference>
<dbReference type="GeneID" id="446671"/>
<dbReference type="KEGG" id="xla:446671"/>
<dbReference type="AGR" id="Xenbase:XB-GENE-6085232"/>
<dbReference type="CTD" id="446671"/>
<dbReference type="Xenbase" id="XB-GENE-6085232">
    <property type="gene designation" value="pik3c3.L"/>
</dbReference>
<dbReference type="OMA" id="LHKFAQY"/>
<dbReference type="OrthoDB" id="67688at2759"/>
<dbReference type="Proteomes" id="UP000186698">
    <property type="component" value="Chromosome 1L"/>
</dbReference>
<dbReference type="Bgee" id="446671">
    <property type="expression patterns" value="Expressed in testis and 19 other cell types or tissues"/>
</dbReference>
<dbReference type="GO" id="GO:0005737">
    <property type="term" value="C:cytoplasm"/>
    <property type="evidence" value="ECO:0000318"/>
    <property type="project" value="GO_Central"/>
</dbReference>
<dbReference type="GO" id="GO:0005768">
    <property type="term" value="C:endosome"/>
    <property type="evidence" value="ECO:0000318"/>
    <property type="project" value="GO_Central"/>
</dbReference>
<dbReference type="GO" id="GO:0016020">
    <property type="term" value="C:membrane"/>
    <property type="evidence" value="ECO:0000318"/>
    <property type="project" value="GO_Central"/>
</dbReference>
<dbReference type="GO" id="GO:0030496">
    <property type="term" value="C:midbody"/>
    <property type="evidence" value="ECO:0000250"/>
    <property type="project" value="UniProtKB"/>
</dbReference>
<dbReference type="GO" id="GO:0005777">
    <property type="term" value="C:peroxisome"/>
    <property type="evidence" value="ECO:0000318"/>
    <property type="project" value="GO_Central"/>
</dbReference>
<dbReference type="GO" id="GO:0000407">
    <property type="term" value="C:phagophore assembly site"/>
    <property type="evidence" value="ECO:0000318"/>
    <property type="project" value="GO_Central"/>
</dbReference>
<dbReference type="GO" id="GO:0034271">
    <property type="term" value="C:phosphatidylinositol 3-kinase complex, class III, type I"/>
    <property type="evidence" value="ECO:0000318"/>
    <property type="project" value="GO_Central"/>
</dbReference>
<dbReference type="GO" id="GO:0034272">
    <property type="term" value="C:phosphatidylinositol 3-kinase complex, class III, type II"/>
    <property type="evidence" value="ECO:0000318"/>
    <property type="project" value="GO_Central"/>
</dbReference>
<dbReference type="GO" id="GO:0016303">
    <property type="term" value="F:1-phosphatidylinositol-3-kinase activity"/>
    <property type="evidence" value="ECO:0000250"/>
    <property type="project" value="UniProtKB"/>
</dbReference>
<dbReference type="GO" id="GO:0005524">
    <property type="term" value="F:ATP binding"/>
    <property type="evidence" value="ECO:0007669"/>
    <property type="project" value="UniProtKB-KW"/>
</dbReference>
<dbReference type="GO" id="GO:0000045">
    <property type="term" value="P:autophagosome assembly"/>
    <property type="evidence" value="ECO:0000318"/>
    <property type="project" value="GO_Central"/>
</dbReference>
<dbReference type="GO" id="GO:0051301">
    <property type="term" value="P:cell division"/>
    <property type="evidence" value="ECO:0007669"/>
    <property type="project" value="UniProtKB-KW"/>
</dbReference>
<dbReference type="GO" id="GO:0006897">
    <property type="term" value="P:endocytosis"/>
    <property type="evidence" value="ECO:0000318"/>
    <property type="project" value="GO_Central"/>
</dbReference>
<dbReference type="GO" id="GO:0000425">
    <property type="term" value="P:pexophagy"/>
    <property type="evidence" value="ECO:0000318"/>
    <property type="project" value="GO_Central"/>
</dbReference>
<dbReference type="GO" id="GO:0036092">
    <property type="term" value="P:phosphatidylinositol-3-phosphate biosynthetic process"/>
    <property type="evidence" value="ECO:0000318"/>
    <property type="project" value="GO_Central"/>
</dbReference>
<dbReference type="GO" id="GO:0048015">
    <property type="term" value="P:phosphatidylinositol-mediated signaling"/>
    <property type="evidence" value="ECO:0000318"/>
    <property type="project" value="GO_Central"/>
</dbReference>
<dbReference type="GO" id="GO:0032465">
    <property type="term" value="P:regulation of cytokinesis"/>
    <property type="evidence" value="ECO:0000250"/>
    <property type="project" value="UniProtKB"/>
</dbReference>
<dbReference type="CDD" id="cd08397">
    <property type="entry name" value="C2_PI3K_class_III"/>
    <property type="match status" value="1"/>
</dbReference>
<dbReference type="CDD" id="cd00870">
    <property type="entry name" value="PI3Ka_III"/>
    <property type="match status" value="1"/>
</dbReference>
<dbReference type="CDD" id="cd00896">
    <property type="entry name" value="PI3Kc_III"/>
    <property type="match status" value="1"/>
</dbReference>
<dbReference type="FunFam" id="1.10.1070.11:FF:000002">
    <property type="entry name" value="Phosphatidylinositol 3-kinase catalytic subunit type 3"/>
    <property type="match status" value="1"/>
</dbReference>
<dbReference type="FunFam" id="1.25.40.70:FF:000003">
    <property type="entry name" value="Phosphatidylinositol 3-kinase catalytic subunit type 3"/>
    <property type="match status" value="1"/>
</dbReference>
<dbReference type="FunFam" id="2.60.40.150:FF:000043">
    <property type="entry name" value="Phosphatidylinositol 3-kinase catalytic subunit type 3"/>
    <property type="match status" value="1"/>
</dbReference>
<dbReference type="FunFam" id="3.30.1010.10:FF:000002">
    <property type="entry name" value="Phosphatidylinositol 3-kinase catalytic subunit type 3"/>
    <property type="match status" value="1"/>
</dbReference>
<dbReference type="Gene3D" id="2.60.40.150">
    <property type="entry name" value="C2 domain"/>
    <property type="match status" value="1"/>
</dbReference>
<dbReference type="Gene3D" id="1.10.1070.11">
    <property type="entry name" value="Phosphatidylinositol 3-/4-kinase, catalytic domain"/>
    <property type="match status" value="1"/>
</dbReference>
<dbReference type="Gene3D" id="3.30.1010.10">
    <property type="entry name" value="Phosphatidylinositol 3-kinase Catalytic Subunit, Chain A, domain 4"/>
    <property type="match status" value="1"/>
</dbReference>
<dbReference type="Gene3D" id="1.25.40.70">
    <property type="entry name" value="Phosphatidylinositol 3-kinase, accessory domain (PIK)"/>
    <property type="match status" value="1"/>
</dbReference>
<dbReference type="InterPro" id="IPR016024">
    <property type="entry name" value="ARM-type_fold"/>
</dbReference>
<dbReference type="InterPro" id="IPR035892">
    <property type="entry name" value="C2_domain_sf"/>
</dbReference>
<dbReference type="InterPro" id="IPR011009">
    <property type="entry name" value="Kinase-like_dom_sf"/>
</dbReference>
<dbReference type="InterPro" id="IPR000403">
    <property type="entry name" value="PI3/4_kinase_cat_dom"/>
</dbReference>
<dbReference type="InterPro" id="IPR036940">
    <property type="entry name" value="PI3/4_kinase_cat_sf"/>
</dbReference>
<dbReference type="InterPro" id="IPR018936">
    <property type="entry name" value="PI3/4_kinase_CS"/>
</dbReference>
<dbReference type="InterPro" id="IPR002420">
    <property type="entry name" value="PI3K-type_C2_dom"/>
</dbReference>
<dbReference type="InterPro" id="IPR001263">
    <property type="entry name" value="PI3K_accessory_dom"/>
</dbReference>
<dbReference type="InterPro" id="IPR042236">
    <property type="entry name" value="PI3K_accessory_sf"/>
</dbReference>
<dbReference type="InterPro" id="IPR008290">
    <property type="entry name" value="PI3K_Vps34"/>
</dbReference>
<dbReference type="InterPro" id="IPR015433">
    <property type="entry name" value="PI_Kinase"/>
</dbReference>
<dbReference type="PANTHER" id="PTHR10048:SF7">
    <property type="entry name" value="PHOSPHATIDYLINOSITOL 3-KINASE CATALYTIC SUBUNIT TYPE 3"/>
    <property type="match status" value="1"/>
</dbReference>
<dbReference type="PANTHER" id="PTHR10048">
    <property type="entry name" value="PHOSPHATIDYLINOSITOL KINASE"/>
    <property type="match status" value="1"/>
</dbReference>
<dbReference type="Pfam" id="PF00454">
    <property type="entry name" value="PI3_PI4_kinase"/>
    <property type="match status" value="1"/>
</dbReference>
<dbReference type="Pfam" id="PF00792">
    <property type="entry name" value="PI3K_C2"/>
    <property type="match status" value="1"/>
</dbReference>
<dbReference type="Pfam" id="PF00613">
    <property type="entry name" value="PI3Ka"/>
    <property type="match status" value="1"/>
</dbReference>
<dbReference type="PIRSF" id="PIRSF000587">
    <property type="entry name" value="PI3K_Vps34"/>
    <property type="match status" value="1"/>
</dbReference>
<dbReference type="SMART" id="SM00142">
    <property type="entry name" value="PI3K_C2"/>
    <property type="match status" value="1"/>
</dbReference>
<dbReference type="SMART" id="SM00145">
    <property type="entry name" value="PI3Ka"/>
    <property type="match status" value="1"/>
</dbReference>
<dbReference type="SMART" id="SM00146">
    <property type="entry name" value="PI3Kc"/>
    <property type="match status" value="1"/>
</dbReference>
<dbReference type="SUPFAM" id="SSF48371">
    <property type="entry name" value="ARM repeat"/>
    <property type="match status" value="1"/>
</dbReference>
<dbReference type="SUPFAM" id="SSF49562">
    <property type="entry name" value="C2 domain (Calcium/lipid-binding domain, CaLB)"/>
    <property type="match status" value="1"/>
</dbReference>
<dbReference type="SUPFAM" id="SSF56112">
    <property type="entry name" value="Protein kinase-like (PK-like)"/>
    <property type="match status" value="1"/>
</dbReference>
<dbReference type="PROSITE" id="PS51547">
    <property type="entry name" value="C2_PI3K"/>
    <property type="match status" value="1"/>
</dbReference>
<dbReference type="PROSITE" id="PS00915">
    <property type="entry name" value="PI3_4_KINASE_1"/>
    <property type="match status" value="1"/>
</dbReference>
<dbReference type="PROSITE" id="PS00916">
    <property type="entry name" value="PI3_4_KINASE_2"/>
    <property type="match status" value="1"/>
</dbReference>
<dbReference type="PROSITE" id="PS50290">
    <property type="entry name" value="PI3_4_KINASE_3"/>
    <property type="match status" value="1"/>
</dbReference>
<dbReference type="PROSITE" id="PS51545">
    <property type="entry name" value="PIK_HELICAL"/>
    <property type="match status" value="1"/>
</dbReference>
<evidence type="ECO:0000250" key="1">
    <source>
        <dbReference type="UniProtKB" id="O88763"/>
    </source>
</evidence>
<evidence type="ECO:0000250" key="2">
    <source>
        <dbReference type="UniProtKB" id="Q8NEB9"/>
    </source>
</evidence>
<evidence type="ECO:0000255" key="3">
    <source>
        <dbReference type="PROSITE-ProRule" id="PRU00269"/>
    </source>
</evidence>
<evidence type="ECO:0000255" key="4">
    <source>
        <dbReference type="PROSITE-ProRule" id="PRU00878"/>
    </source>
</evidence>
<evidence type="ECO:0000255" key="5">
    <source>
        <dbReference type="PROSITE-ProRule" id="PRU00880"/>
    </source>
</evidence>
<evidence type="ECO:0000256" key="6">
    <source>
        <dbReference type="SAM" id="MobiDB-lite"/>
    </source>
</evidence>
<sequence length="886" mass="101157">MGESDRFCYVYSCDLDISVRLKIGSLEGKREQKSYKAVLEDPMLKFSGLYQETCSDLYVTCQVFAEGKPLALPVRTSYKAFSTRWNWNEWLKLPVKYADLPRSAQVALTIWDVYGPGKAIPVGGATVSLFGKYGMFRQGMHDLKVWPNIEADGSELTKTPGRTNSSASEDQMSRLAKLTKAHRQGHMVKVDWLDRLTFREIEMINESEKRSSNFMYLMVEFPCVKCDEKEYGIVYYEKDGDESTPISTSSEIVRVPDPQMSMENLVEIKHHKLARSLRSGPSDHDLKPNAATRDQLNIIVSYPPTKQLTSEEQDLVWKFRSYLTSQEKALTKFLKCVNWDLPQEAKQALELLGKWKPMDVEDSLELLSSHFTNPTVRRYAVARLQQADDEDLLMYLLQLVQALKYENFEDIKSGLEPTKKDSQGPMLESMTTSGINPETDSSQILSNPLPAVSSPAPPSKTKDGLDAETLEQDLCTFLISRACKNSTLANYLYWYVIVECEDQDTQLRDPKTHEMYLNVMRRFSQALLKGDKSVRVMRSLLATQQTFVDRLVHLMKAVQRESGNRKKKNERLQALLGDNEKMNLSEFEPIPLPLEPQVKIRGIIPEKATLFKSALMPAKLYFKTEDGGKYPVIFKNGDDLRQDQLILQIISLMDKLLRKENLDLKLTPYKVLATSTKHGFMQFIQSVPVAEVLATEGSIQNFFRKYSPSEKGPYGISAEVMDTYVKSCAGYCVITYILGVGDRHLDNLLLTKTGKLFHIDFGYILGRDPKPLPPPMKLNKEMVEGMGGTQSEQYQAFRKQCYTAFLHLRRYSNLILNLFSLMVDANIPDIALEPDKTVKKVQDKFRLDLSDEEAVHYMQTLIDDSVNALFAAVVEQIHKFAQYWRR</sequence>
<accession>Q6AZN6</accession>
<comment type="function">
    <text evidence="1 2">Catalytic subunit of the PI3K complex that mediates formation of phosphatidylinositol 3-phosphate; different complex forms are believed to play a role in multiple membrane trafficking pathways. Involved in the transport of lysosomal enzyme precursors to lysosomes. Required for transport from early to late endosomes (By similarity).</text>
</comment>
<comment type="catalytic activity">
    <reaction evidence="2">
        <text>a 1,2-diacyl-sn-glycero-3-phospho-(1D-myo-inositol) + ATP = a 1,2-diacyl-sn-glycero-3-phospho-(1D-myo-inositol-3-phosphate) + ADP + H(+)</text>
        <dbReference type="Rhea" id="RHEA:12709"/>
        <dbReference type="ChEBI" id="CHEBI:15378"/>
        <dbReference type="ChEBI" id="CHEBI:30616"/>
        <dbReference type="ChEBI" id="CHEBI:57880"/>
        <dbReference type="ChEBI" id="CHEBI:58088"/>
        <dbReference type="ChEBI" id="CHEBI:456216"/>
        <dbReference type="EC" id="2.7.1.137"/>
    </reaction>
    <physiologicalReaction direction="left-to-right" evidence="2">
        <dbReference type="Rhea" id="RHEA:12710"/>
    </physiologicalReaction>
</comment>
<comment type="cofactor">
    <cofactor evidence="2">
        <name>Mn(2+)</name>
        <dbReference type="ChEBI" id="CHEBI:29035"/>
    </cofactor>
</comment>
<comment type="subunit">
    <text evidence="2">Component of the PI3K (PI3KC3/PI3K-III/class III phosphatidylinositol 3-kinase) complex the core of which is composed of the catalytic subunit pik3c3, the regulatory subunit pik3r4 and becn1 associating with additional regulatory/auxiliary subunits to form alternative complex forms.</text>
</comment>
<comment type="subcellular location">
    <subcellularLocation>
        <location evidence="2">Midbody</location>
    </subcellularLocation>
</comment>
<comment type="similarity">
    <text evidence="5">Belongs to the PI3/PI4-kinase family.</text>
</comment>
<proteinExistence type="evidence at transcript level"/>
<reference key="1">
    <citation type="submission" date="2004-07" db="EMBL/GenBank/DDBJ databases">
        <authorList>
            <consortium name="NIH - Xenopus Gene Collection (XGC) project"/>
        </authorList>
    </citation>
    <scope>NUCLEOTIDE SEQUENCE [LARGE SCALE MRNA]</scope>
    <source>
        <tissue>Embryo</tissue>
    </source>
</reference>
<name>PK3C3_XENLA</name>
<organism>
    <name type="scientific">Xenopus laevis</name>
    <name type="common">African clawed frog</name>
    <dbReference type="NCBI Taxonomy" id="8355"/>
    <lineage>
        <taxon>Eukaryota</taxon>
        <taxon>Metazoa</taxon>
        <taxon>Chordata</taxon>
        <taxon>Craniata</taxon>
        <taxon>Vertebrata</taxon>
        <taxon>Euteleostomi</taxon>
        <taxon>Amphibia</taxon>
        <taxon>Batrachia</taxon>
        <taxon>Anura</taxon>
        <taxon>Pipoidea</taxon>
        <taxon>Pipidae</taxon>
        <taxon>Xenopodinae</taxon>
        <taxon>Xenopus</taxon>
        <taxon>Xenopus</taxon>
    </lineage>
</organism>
<feature type="chain" id="PRO_0000088806" description="Phosphatidylinositol 3-kinase catalytic subunit type 3">
    <location>
        <begin position="1"/>
        <end position="886"/>
    </location>
</feature>
<feature type="domain" description="C2 PI3K-type" evidence="5">
    <location>
        <begin position="35"/>
        <end position="184"/>
    </location>
</feature>
<feature type="domain" description="PIK helical" evidence="4">
    <location>
        <begin position="283"/>
        <end position="519"/>
    </location>
</feature>
<feature type="domain" description="PI3K/PI4K catalytic" evidence="3">
    <location>
        <begin position="604"/>
        <end position="870"/>
    </location>
</feature>
<feature type="region of interest" description="Disordered" evidence="6">
    <location>
        <begin position="414"/>
        <end position="464"/>
    </location>
</feature>
<feature type="region of interest" description="G-loop" evidence="3">
    <location>
        <begin position="610"/>
        <end position="616"/>
    </location>
</feature>
<feature type="region of interest" description="Catalytic loop" evidence="3">
    <location>
        <begin position="739"/>
        <end position="747"/>
    </location>
</feature>
<feature type="region of interest" description="Activation loop" evidence="3">
    <location>
        <begin position="758"/>
        <end position="779"/>
    </location>
</feature>
<feature type="compositionally biased region" description="Polar residues" evidence="6">
    <location>
        <begin position="429"/>
        <end position="444"/>
    </location>
</feature>
<feature type="compositionally biased region" description="Low complexity" evidence="6">
    <location>
        <begin position="445"/>
        <end position="454"/>
    </location>
</feature>
<keyword id="KW-0067">ATP-binding</keyword>
<keyword id="KW-0072">Autophagy</keyword>
<keyword id="KW-0131">Cell cycle</keyword>
<keyword id="KW-0132">Cell division</keyword>
<keyword id="KW-0418">Kinase</keyword>
<keyword id="KW-0443">Lipid metabolism</keyword>
<keyword id="KW-0464">Manganese</keyword>
<keyword id="KW-0547">Nucleotide-binding</keyword>
<keyword id="KW-1185">Reference proteome</keyword>
<keyword id="KW-0808">Transferase</keyword>
<gene>
    <name type="primary">pik3c3</name>
</gene>